<protein>
    <recommendedName>
        <fullName>Protein HIR2</fullName>
    </recommendedName>
    <alternativeName>
        <fullName>Histone transcription regulator 2</fullName>
    </alternativeName>
</protein>
<name>HIR2_YEAST</name>
<gene>
    <name type="primary">HIR2</name>
    <name type="ordered locus">YOR038C</name>
    <name type="ORF">OR26.31</name>
</gene>
<keyword id="KW-0002">3D-structure</keyword>
<keyword id="KW-0156">Chromatin regulator</keyword>
<keyword id="KW-0158">Chromosome</keyword>
<keyword id="KW-0539">Nucleus</keyword>
<keyword id="KW-0597">Phosphoprotein</keyword>
<keyword id="KW-1185">Reference proteome</keyword>
<keyword id="KW-0677">Repeat</keyword>
<keyword id="KW-0678">Repressor</keyword>
<keyword id="KW-0804">Transcription</keyword>
<keyword id="KW-0805">Transcription regulation</keyword>
<keyword id="KW-0853">WD repeat</keyword>
<sequence length="875" mass="98445">MRLLKYPLDIHNEQVNALAALGPYIILAGSGGHVMAWRQQQLVDTAFDRVMIKDLKPEVSFQVDQDTTGDIFFITGDLETLYIGSEHRLWGYSGWLCRDTNNINSVEKMNSKLLFECKSPSTITDVKYDINLGILFVLLSNENKILLFRHKTFDKLSEITIDKASKPITGIIDPTGQTFTVMTSDRSILVYQINKTGTHKLINKLTQHVQMYPLHYRISMSPQADILPVINSVKGVPNNATSCTALLDRNNNYKVTKTLVTPSSNGCRVLVYSPAFYEKPNLKKGTSTRYNLIATSGSTDGTILVWNTKRMKPLFNALQVSSTAINDMSWSQDGFTLFAISNDATLYTFAFQEKDLGVALPQTEIKSLQEVNKKLPKLEEPLAEQIPKSFPENIKLEESASAAPIPNDIGRSAVGKKPTKKKTANNQTNGIKTIQSTSMEFNTPSYTVPRDLKRKPKEATPSNIAPGSKKQKKELQPIDFLDTGLLLPNTSFSRIRLATPKIRSTFKYSPINNPNLILDVKNGSGNEQRPTIVKLTSKVLDQDQVLFQDFIPKLITICTAGDTFWSFCSEDGSIYIYSDSGRKLMAPLVLGVSISFLEACGTYLLCLTSIGELYCWNIEQKKLAFPTNTIYPLLNPSLRYSDDILTRAENITLCSITKKGVPLVTLSNGDGYLFDKNMETWLLVSDGWWAYGSQYWDTTNTTGLSSSKANTDSFNGSESNINEIVSDIKNDNQSIINFLECKTNDELNRKGRIKNLQRFARTILMKEGFENMEEIVTLSHLENKILISIRLEEPEEFSKLMMVYCIRLSELGYMDRLNDVFQWLYDDLPISGTGSAFADKDFKRNLLKKILIACGDIRQVQRVTTRYAKEMNIIS</sequence>
<organism>
    <name type="scientific">Saccharomyces cerevisiae (strain ATCC 204508 / S288c)</name>
    <name type="common">Baker's yeast</name>
    <dbReference type="NCBI Taxonomy" id="559292"/>
    <lineage>
        <taxon>Eukaryota</taxon>
        <taxon>Fungi</taxon>
        <taxon>Dikarya</taxon>
        <taxon>Ascomycota</taxon>
        <taxon>Saccharomycotina</taxon>
        <taxon>Saccharomycetes</taxon>
        <taxon>Saccharomycetales</taxon>
        <taxon>Saccharomycetaceae</taxon>
        <taxon>Saccharomyces</taxon>
    </lineage>
</organism>
<proteinExistence type="evidence at protein level"/>
<reference key="1">
    <citation type="journal article" date="1993" name="Mol. Cell. Biol.">
        <title>Characterization of HIR1 and HIR2, two genes required for regulation of histone gene transcription in Saccharomyces cerevisiae.</title>
        <authorList>
            <person name="Sherwood P.W."/>
            <person name="Tsang S.V."/>
            <person name="Osley M.A."/>
        </authorList>
    </citation>
    <scope>NUCLEOTIDE SEQUENCE [GENOMIC DNA]</scope>
    <scope>FUNCTION</scope>
    <scope>SUBCELLULAR LOCATION</scope>
</reference>
<reference key="2">
    <citation type="journal article" date="1997" name="Nature">
        <title>The nucleotide sequence of Saccharomyces cerevisiae chromosome XV.</title>
        <authorList>
            <person name="Dujon B."/>
            <person name="Albermann K."/>
            <person name="Aldea M."/>
            <person name="Alexandraki D."/>
            <person name="Ansorge W."/>
            <person name="Arino J."/>
            <person name="Benes V."/>
            <person name="Bohn C."/>
            <person name="Bolotin-Fukuhara M."/>
            <person name="Bordonne R."/>
            <person name="Boyer J."/>
            <person name="Camasses A."/>
            <person name="Casamayor A."/>
            <person name="Casas C."/>
            <person name="Cheret G."/>
            <person name="Cziepluch C."/>
            <person name="Daignan-Fornier B."/>
            <person name="Dang V.-D."/>
            <person name="de Haan M."/>
            <person name="Delius H."/>
            <person name="Durand P."/>
            <person name="Fairhead C."/>
            <person name="Feldmann H."/>
            <person name="Gaillon L."/>
            <person name="Galisson F."/>
            <person name="Gamo F.-J."/>
            <person name="Gancedo C."/>
            <person name="Goffeau A."/>
            <person name="Goulding S.E."/>
            <person name="Grivell L.A."/>
            <person name="Habbig B."/>
            <person name="Hand N.J."/>
            <person name="Hani J."/>
            <person name="Hattenhorst U."/>
            <person name="Hebling U."/>
            <person name="Hernando Y."/>
            <person name="Herrero E."/>
            <person name="Heumann K."/>
            <person name="Hiesel R."/>
            <person name="Hilger F."/>
            <person name="Hofmann B."/>
            <person name="Hollenberg C.P."/>
            <person name="Hughes B."/>
            <person name="Jauniaux J.-C."/>
            <person name="Kalogeropoulos A."/>
            <person name="Katsoulou C."/>
            <person name="Kordes E."/>
            <person name="Lafuente M.J."/>
            <person name="Landt O."/>
            <person name="Louis E.J."/>
            <person name="Maarse A.C."/>
            <person name="Madania A."/>
            <person name="Mannhaupt G."/>
            <person name="Marck C."/>
            <person name="Martin R.P."/>
            <person name="Mewes H.-W."/>
            <person name="Michaux G."/>
            <person name="Paces V."/>
            <person name="Parle-McDermott A.G."/>
            <person name="Pearson B.M."/>
            <person name="Perrin A."/>
            <person name="Pettersson B."/>
            <person name="Poch O."/>
            <person name="Pohl T.M."/>
            <person name="Poirey R."/>
            <person name="Portetelle D."/>
            <person name="Pujol A."/>
            <person name="Purnelle B."/>
            <person name="Ramezani Rad M."/>
            <person name="Rechmann S."/>
            <person name="Schwager C."/>
            <person name="Schweizer M."/>
            <person name="Sor F."/>
            <person name="Sterky F."/>
            <person name="Tarassov I.A."/>
            <person name="Teodoru C."/>
            <person name="Tettelin H."/>
            <person name="Thierry A."/>
            <person name="Tobiasch E."/>
            <person name="Tzermia M."/>
            <person name="Uhlen M."/>
            <person name="Unseld M."/>
            <person name="Valens M."/>
            <person name="Vandenbol M."/>
            <person name="Vetter I."/>
            <person name="Vlcek C."/>
            <person name="Voet M."/>
            <person name="Volckaert G."/>
            <person name="Voss H."/>
            <person name="Wambutt R."/>
            <person name="Wedler H."/>
            <person name="Wiemann S."/>
            <person name="Winsor B."/>
            <person name="Wolfe K.H."/>
            <person name="Zollner A."/>
            <person name="Zumstein E."/>
            <person name="Kleine K."/>
        </authorList>
    </citation>
    <scope>NUCLEOTIDE SEQUENCE [LARGE SCALE GENOMIC DNA]</scope>
    <source>
        <strain>ATCC 204508 / S288c</strain>
    </source>
</reference>
<reference key="3">
    <citation type="journal article" date="2014" name="G3 (Bethesda)">
        <title>The reference genome sequence of Saccharomyces cerevisiae: Then and now.</title>
        <authorList>
            <person name="Engel S.R."/>
            <person name="Dietrich F.S."/>
            <person name="Fisk D.G."/>
            <person name="Binkley G."/>
            <person name="Balakrishnan R."/>
            <person name="Costanzo M.C."/>
            <person name="Dwight S.S."/>
            <person name="Hitz B.C."/>
            <person name="Karra K."/>
            <person name="Nash R.S."/>
            <person name="Weng S."/>
            <person name="Wong E.D."/>
            <person name="Lloyd P."/>
            <person name="Skrzypek M.S."/>
            <person name="Miyasato S.R."/>
            <person name="Simison M."/>
            <person name="Cherry J.M."/>
        </authorList>
    </citation>
    <scope>GENOME REANNOTATION</scope>
    <source>
        <strain>ATCC 204508 / S288c</strain>
    </source>
</reference>
<reference key="4">
    <citation type="journal article" date="1994" name="J. Biol. Chem.">
        <title>Cloning and disruption of CKB2, the gene encoding the 32-kDa regulatory beta'-subunit of Saccharomyces cerevisiae casein kinase II.</title>
        <authorList>
            <person name="Reed J.C."/>
            <person name="Bidwai A.P."/>
            <person name="Glover C.V.C."/>
        </authorList>
    </citation>
    <scope>NUCLEOTIDE SEQUENCE [GENOMIC DNA] OF 1-113</scope>
</reference>
<reference key="5">
    <citation type="journal article" date="1997" name="Mol. Cell. Biol.">
        <title>Hir1p and Hir2p function as transcriptional corepressors to regulate histone gene transcription in the Saccharomyces cerevisiae cell cycle.</title>
        <authorList>
            <person name="Spector M.S."/>
            <person name="Raff A."/>
            <person name="DeSilva H."/>
            <person name="Lee K."/>
            <person name="Osley M.A."/>
        </authorList>
    </citation>
    <scope>FUNCTION</scope>
    <scope>INTERACTION WITH HIR1</scope>
</reference>
<reference key="6">
    <citation type="journal article" date="1998" name="Mol. Cell. Biol.">
        <title>Yeast Ty1 retrotransposition is stimulated by a synergistic interaction between mutations in chromatin assembly factor I and histone regulatory proteins.</title>
        <authorList>
            <person name="Qian Z."/>
            <person name="Huang H."/>
            <person name="Hong J.Y."/>
            <person name="Burck C.L."/>
            <person name="Johnston S.D."/>
            <person name="Berman J."/>
            <person name="Carol A."/>
            <person name="Liebman S.W."/>
        </authorList>
    </citation>
    <scope>FUNCTION</scope>
</reference>
<reference key="7">
    <citation type="journal article" date="1998" name="Mol. Cell. Biol.">
        <title>Hir proteins are required for position-dependent gene silencing in Saccharomyces cerevisiae in the absence of chromatin assembly factor I.</title>
        <authorList>
            <person name="Kaufman P.D."/>
            <person name="Cohen J.L."/>
            <person name="Osley M.A."/>
        </authorList>
    </citation>
    <scope>FUNCTION</scope>
</reference>
<reference key="8">
    <citation type="journal article" date="1999" name="Mol. Cell">
        <title>A role for transcriptional repressors in targeting the yeast Swi/Snf complex.</title>
        <authorList>
            <person name="Dimova D."/>
            <person name="Nackerdien Z."/>
            <person name="Furgeson S."/>
            <person name="Eguchi S."/>
            <person name="Osley M.A."/>
        </authorList>
    </citation>
    <scope>FUNCTION</scope>
    <scope>INTERACTION WITH SNF2; SNF5 AND SWI3</scope>
</reference>
<reference key="9">
    <citation type="journal article" date="2001" name="Curr. Biol.">
        <title>Yeast histone deposition protein Asf1p requires Hir proteins and PCNA for heterochromatic silencing.</title>
        <authorList>
            <person name="Sharp J.A."/>
            <person name="Fouts E.T."/>
            <person name="Krawitz D.C."/>
            <person name="Kaufman P.D."/>
        </authorList>
    </citation>
    <scope>INTERACTION WITH ASF1</scope>
</reference>
<reference key="10">
    <citation type="journal article" date="2002" name="Genes Dev.">
        <title>Genome-wide location and regulated recruitment of the RSC nucleosome-remodeling complex.</title>
        <authorList>
            <person name="Ng H.H."/>
            <person name="Robert F."/>
            <person name="Young R.A."/>
            <person name="Struhl K."/>
        </authorList>
    </citation>
    <scope>FUNCTION</scope>
</reference>
<reference key="11">
    <citation type="journal article" date="2002" name="Genetics">
        <title>Defects in SPT16 or POB3 (yFACT) in Saccharomyces cerevisiae cause dependence on the Hir/Hpc pathway: polymerase passage may degrade chromatin structure.</title>
        <authorList>
            <person name="Formosa T."/>
            <person name="Ruone S."/>
            <person name="Adams M.D."/>
            <person name="Olsen A.E."/>
            <person name="Eriksson P."/>
            <person name="Yu Y."/>
            <person name="Rhoades A.R."/>
            <person name="Kaufman P.D."/>
            <person name="Stillman D.J."/>
        </authorList>
    </citation>
    <scope>FUNCTION</scope>
</reference>
<reference key="12">
    <citation type="journal article" date="2003" name="Nature">
        <title>Global analysis of protein expression in yeast.</title>
        <authorList>
            <person name="Ghaemmaghami S."/>
            <person name="Huh W.-K."/>
            <person name="Bower K."/>
            <person name="Howson R.W."/>
            <person name="Belle A."/>
            <person name="Dephoure N."/>
            <person name="O'Shea E.K."/>
            <person name="Weissman J.S."/>
        </authorList>
    </citation>
    <scope>LEVEL OF PROTEIN EXPRESSION [LARGE SCALE ANALYSIS]</scope>
</reference>
<reference key="13">
    <citation type="journal article" date="2005" name="Curr. Biol.">
        <title>Replication-independent histone deposition by the HIR complex and Asf1.</title>
        <authorList>
            <person name="Green E.M."/>
            <person name="Antczak A.J."/>
            <person name="Bailey A.O."/>
            <person name="Franco A.A."/>
            <person name="Wu K.J."/>
            <person name="Yates J.R. III"/>
            <person name="Kaufman P.D."/>
        </authorList>
    </citation>
    <scope>FUNCTION</scope>
    <scope>IDENTIFICATION BY MASS SPECTROMETRY</scope>
    <scope>IDENTIFICATION IN A COMPLEX WITH HIR1; HIR3 AND HPC2</scope>
    <scope>INTERACTION WITH ASF1</scope>
</reference>
<reference key="14">
    <citation type="journal article" date="2005" name="Genes Dev.">
        <title>The HIR corepressor complex binds to nucleosomes generating a distinct protein/DNA complex resistant to remodeling by SWI/SNF.</title>
        <authorList>
            <person name="Prochasson P."/>
            <person name="Florens L."/>
            <person name="Swanson S.K."/>
            <person name="Washburn M.P."/>
            <person name="Workman J.L."/>
        </authorList>
    </citation>
    <scope>FUNCTION</scope>
    <scope>IDENTIFICATION BY MASS SPECTROMETRY</scope>
    <scope>IDENTIFICATION IN A COMPLEX WITH HIR1; HIR3 AND HPC2</scope>
</reference>
<reference key="15">
    <citation type="journal article" date="2006" name="Mol. Cell. Biol.">
        <title>Evidence that Spt2/Sin1, an HMG-like factor, plays roles in transcription elongation, chromatin structure, and genome stability in Saccharomyces cerevisiae.</title>
        <authorList>
            <person name="Nourani A."/>
            <person name="Robert F."/>
            <person name="Winston F."/>
        </authorList>
    </citation>
    <scope>FUNCTION</scope>
</reference>
<reference key="16">
    <citation type="journal article" date="2008" name="Mol. Cell. Proteomics">
        <title>A multidimensional chromatography technology for in-depth phosphoproteome analysis.</title>
        <authorList>
            <person name="Albuquerque C.P."/>
            <person name="Smolka M.B."/>
            <person name="Payne S.H."/>
            <person name="Bafna V."/>
            <person name="Eng J."/>
            <person name="Zhou H."/>
        </authorList>
    </citation>
    <scope>PHOSPHORYLATION [LARGE SCALE ANALYSIS] AT SER-713</scope>
    <scope>IDENTIFICATION BY MASS SPECTROMETRY [LARGE SCALE ANALYSIS]</scope>
</reference>
<reference key="17">
    <citation type="journal article" date="2009" name="Mol. Cell">
        <title>Two-color cell array screen reveals interdependent roles for histone chaperones and a chromatin boundary regulator in histone gene repression.</title>
        <authorList>
            <person name="Fillingham J."/>
            <person name="Kainth P."/>
            <person name="Lambert J.P."/>
            <person name="van Bakel H."/>
            <person name="Tsui K."/>
            <person name="Pena-Castillo L."/>
            <person name="Nislow C."/>
            <person name="Figeys D."/>
            <person name="Hughes T.R."/>
            <person name="Greenblatt J."/>
            <person name="Andrews B.J."/>
        </authorList>
    </citation>
    <scope>INTERACTION WITH RTT106</scope>
    <scope>SUBCELLULAR LOCATION</scope>
    <scope>DISRUPTION PHENOTYPE</scope>
</reference>
<evidence type="ECO:0000256" key="1">
    <source>
        <dbReference type="SAM" id="MobiDB-lite"/>
    </source>
</evidence>
<evidence type="ECO:0000269" key="2">
    <source>
    </source>
</evidence>
<evidence type="ECO:0000269" key="3">
    <source>
    </source>
</evidence>
<evidence type="ECO:0000269" key="4">
    <source>
    </source>
</evidence>
<evidence type="ECO:0000269" key="5">
    <source>
    </source>
</evidence>
<evidence type="ECO:0000269" key="6">
    <source>
    </source>
</evidence>
<evidence type="ECO:0000269" key="7">
    <source>
    </source>
</evidence>
<evidence type="ECO:0000269" key="8">
    <source>
    </source>
</evidence>
<evidence type="ECO:0000269" key="9">
    <source>
    </source>
</evidence>
<evidence type="ECO:0000269" key="10">
    <source>
    </source>
</evidence>
<evidence type="ECO:0000269" key="11">
    <source>
    </source>
</evidence>
<evidence type="ECO:0000269" key="12">
    <source>
    </source>
</evidence>
<evidence type="ECO:0000269" key="13">
    <source>
    </source>
</evidence>
<evidence type="ECO:0000269" key="14">
    <source>
    </source>
</evidence>
<evidence type="ECO:0000305" key="15"/>
<evidence type="ECO:0007744" key="16">
    <source>
    </source>
</evidence>
<evidence type="ECO:0007829" key="17">
    <source>
        <dbReference type="PDB" id="8GHL"/>
    </source>
</evidence>
<evidence type="ECO:0007829" key="18">
    <source>
        <dbReference type="PDB" id="8GHN"/>
    </source>
</evidence>
<feature type="chain" id="PRO_0000051017" description="Protein HIR2">
    <location>
        <begin position="1"/>
        <end position="875"/>
    </location>
</feature>
<feature type="repeat" description="WD 1">
    <location>
        <begin position="10"/>
        <end position="47"/>
    </location>
</feature>
<feature type="repeat" description="WD 2">
    <location>
        <begin position="118"/>
        <end position="158"/>
    </location>
</feature>
<feature type="repeat" description="WD 3">
    <location>
        <begin position="163"/>
        <end position="201"/>
    </location>
</feature>
<feature type="repeat" description="WD 4">
    <location>
        <begin position="237"/>
        <end position="277"/>
    </location>
</feature>
<feature type="repeat" description="WD 5">
    <location>
        <begin position="278"/>
        <end position="316"/>
    </location>
</feature>
<feature type="repeat" description="WD 6">
    <location>
        <begin position="320"/>
        <end position="359"/>
    </location>
</feature>
<feature type="repeat" description="WD 7">
    <location>
        <begin position="546"/>
        <end position="587"/>
    </location>
</feature>
<feature type="repeat" description="WD 8">
    <location>
        <begin position="589"/>
        <end position="626"/>
    </location>
</feature>
<feature type="region of interest" description="Disordered" evidence="1">
    <location>
        <begin position="398"/>
        <end position="473"/>
    </location>
</feature>
<feature type="compositionally biased region" description="Polar residues" evidence="1">
    <location>
        <begin position="424"/>
        <end position="446"/>
    </location>
</feature>
<feature type="modified residue" description="Phosphoserine" evidence="16">
    <location>
        <position position="713"/>
    </location>
</feature>
<feature type="sequence conflict" description="In Ref. 1." evidence="15" ref="1">
    <original>KG</original>
    <variation>NF</variation>
    <location>
        <begin position="284"/>
        <end position="285"/>
    </location>
</feature>
<feature type="sequence conflict" description="In Ref. 1." evidence="15" ref="1">
    <original>KK</original>
    <variation>FL</variation>
    <location>
        <begin position="373"/>
        <end position="374"/>
    </location>
</feature>
<feature type="strand" evidence="18">
    <location>
        <begin position="2"/>
        <end position="7"/>
    </location>
</feature>
<feature type="strand" evidence="18">
    <location>
        <begin position="17"/>
        <end position="21"/>
    </location>
</feature>
<feature type="strand" evidence="18">
    <location>
        <begin position="24"/>
        <end position="28"/>
    </location>
</feature>
<feature type="strand" evidence="18">
    <location>
        <begin position="30"/>
        <end position="38"/>
    </location>
</feature>
<feature type="helix" evidence="18">
    <location>
        <begin position="39"/>
        <end position="46"/>
    </location>
</feature>
<feature type="strand" evidence="18">
    <location>
        <begin position="58"/>
        <end position="62"/>
    </location>
</feature>
<feature type="strand" evidence="18">
    <location>
        <begin position="71"/>
        <end position="76"/>
    </location>
</feature>
<feature type="strand" evidence="18">
    <location>
        <begin position="78"/>
        <end position="93"/>
    </location>
</feature>
<feature type="turn" evidence="18">
    <location>
        <begin position="98"/>
        <end position="100"/>
    </location>
</feature>
<feature type="turn" evidence="18">
    <location>
        <begin position="106"/>
        <end position="108"/>
    </location>
</feature>
<feature type="strand" evidence="18">
    <location>
        <begin position="109"/>
        <end position="116"/>
    </location>
</feature>
<feature type="strand" evidence="18">
    <location>
        <begin position="122"/>
        <end position="129"/>
    </location>
</feature>
<feature type="turn" evidence="18">
    <location>
        <begin position="130"/>
        <end position="133"/>
    </location>
</feature>
<feature type="strand" evidence="18">
    <location>
        <begin position="134"/>
        <end position="140"/>
    </location>
</feature>
<feature type="turn" evidence="18">
    <location>
        <begin position="141"/>
        <end position="143"/>
    </location>
</feature>
<feature type="strand" evidence="18">
    <location>
        <begin position="144"/>
        <end position="149"/>
    </location>
</feature>
<feature type="turn" evidence="18">
    <location>
        <begin position="150"/>
        <end position="152"/>
    </location>
</feature>
<feature type="strand" evidence="18">
    <location>
        <begin position="155"/>
        <end position="160"/>
    </location>
</feature>
<feature type="strand" evidence="18">
    <location>
        <begin position="167"/>
        <end position="172"/>
    </location>
</feature>
<feature type="strand" evidence="18">
    <location>
        <begin position="176"/>
        <end position="183"/>
    </location>
</feature>
<feature type="strand" evidence="18">
    <location>
        <begin position="186"/>
        <end position="192"/>
    </location>
</feature>
<feature type="strand" evidence="18">
    <location>
        <begin position="201"/>
        <end position="207"/>
    </location>
</feature>
<feature type="strand" evidence="18">
    <location>
        <begin position="226"/>
        <end position="232"/>
    </location>
</feature>
<feature type="strand" evidence="18">
    <location>
        <begin position="243"/>
        <end position="248"/>
    </location>
</feature>
<feature type="turn" evidence="18">
    <location>
        <begin position="249"/>
        <end position="253"/>
    </location>
</feature>
<feature type="strand" evidence="18">
    <location>
        <begin position="255"/>
        <end position="260"/>
    </location>
</feature>
<feature type="strand" evidence="18">
    <location>
        <begin position="263"/>
        <end position="265"/>
    </location>
</feature>
<feature type="strand" evidence="18">
    <location>
        <begin position="267"/>
        <end position="272"/>
    </location>
</feature>
<feature type="strand" evidence="18">
    <location>
        <begin position="274"/>
        <end position="281"/>
    </location>
</feature>
<feature type="turn" evidence="18">
    <location>
        <begin position="282"/>
        <end position="285"/>
    </location>
</feature>
<feature type="strand" evidence="18">
    <location>
        <begin position="286"/>
        <end position="290"/>
    </location>
</feature>
<feature type="strand" evidence="18">
    <location>
        <begin position="292"/>
        <end position="301"/>
    </location>
</feature>
<feature type="strand" evidence="18">
    <location>
        <begin position="303"/>
        <end position="307"/>
    </location>
</feature>
<feature type="strand" evidence="18">
    <location>
        <begin position="311"/>
        <end position="320"/>
    </location>
</feature>
<feature type="strand" evidence="18">
    <location>
        <begin position="325"/>
        <end position="330"/>
    </location>
</feature>
<feature type="strand" evidence="18">
    <location>
        <begin position="332"/>
        <end position="341"/>
    </location>
</feature>
<feature type="strand" evidence="18">
    <location>
        <begin position="344"/>
        <end position="350"/>
    </location>
</feature>
<feature type="helix" evidence="18">
    <location>
        <begin position="353"/>
        <end position="356"/>
    </location>
</feature>
<feature type="strand" evidence="18">
    <location>
        <begin position="358"/>
        <end position="360"/>
    </location>
</feature>
<feature type="helix" evidence="18">
    <location>
        <begin position="362"/>
        <end position="370"/>
    </location>
</feature>
<feature type="helix" evidence="17">
    <location>
        <begin position="488"/>
        <end position="491"/>
    </location>
</feature>
<feature type="strand" evidence="17">
    <location>
        <begin position="492"/>
        <end position="497"/>
    </location>
</feature>
<feature type="strand" evidence="17">
    <location>
        <begin position="504"/>
        <end position="508"/>
    </location>
</feature>
<feature type="strand" evidence="17">
    <location>
        <begin position="514"/>
        <end position="521"/>
    </location>
</feature>
<feature type="strand" evidence="17">
    <location>
        <begin position="525"/>
        <end position="529"/>
    </location>
</feature>
<feature type="strand" evidence="17">
    <location>
        <begin position="531"/>
        <end position="539"/>
    </location>
</feature>
<feature type="strand" evidence="17">
    <location>
        <begin position="542"/>
        <end position="553"/>
    </location>
</feature>
<feature type="strand" evidence="17">
    <location>
        <begin position="555"/>
        <end position="560"/>
    </location>
</feature>
<feature type="strand" evidence="17">
    <location>
        <begin position="565"/>
        <end position="577"/>
    </location>
</feature>
<feature type="strand" evidence="17">
    <location>
        <begin position="594"/>
        <end position="600"/>
    </location>
</feature>
<feature type="strand" evidence="17">
    <location>
        <begin position="603"/>
        <end position="608"/>
    </location>
</feature>
<feature type="strand" evidence="17">
    <location>
        <begin position="612"/>
        <end position="617"/>
    </location>
</feature>
<feature type="turn" evidence="17">
    <location>
        <begin position="618"/>
        <end position="621"/>
    </location>
</feature>
<feature type="strand" evidence="17">
    <location>
        <begin position="622"/>
        <end position="625"/>
    </location>
</feature>
<feature type="helix" evidence="17">
    <location>
        <begin position="631"/>
        <end position="634"/>
    </location>
</feature>
<feature type="turn" evidence="17">
    <location>
        <begin position="636"/>
        <end position="638"/>
    </location>
</feature>
<feature type="strand" evidence="17">
    <location>
        <begin position="651"/>
        <end position="657"/>
    </location>
</feature>
<feature type="strand" evidence="17">
    <location>
        <begin position="662"/>
        <end position="666"/>
    </location>
</feature>
<feature type="strand" evidence="17">
    <location>
        <begin position="671"/>
        <end position="675"/>
    </location>
</feature>
<feature type="turn" evidence="17">
    <location>
        <begin position="676"/>
        <end position="679"/>
    </location>
</feature>
<feature type="strand" evidence="17">
    <location>
        <begin position="680"/>
        <end position="685"/>
    </location>
</feature>
<feature type="helix" evidence="17">
    <location>
        <begin position="689"/>
        <end position="692"/>
    </location>
</feature>
<feature type="strand" evidence="17">
    <location>
        <begin position="704"/>
        <end position="706"/>
    </location>
</feature>
<feature type="helix" evidence="17">
    <location>
        <begin position="719"/>
        <end position="729"/>
    </location>
</feature>
<feature type="helix" evidence="17">
    <location>
        <begin position="735"/>
        <end position="750"/>
    </location>
</feature>
<feature type="helix" evidence="17">
    <location>
        <begin position="753"/>
        <end position="764"/>
    </location>
</feature>
<feature type="helix" evidence="17">
    <location>
        <begin position="772"/>
        <end position="790"/>
    </location>
</feature>
<feature type="helix" evidence="17">
    <location>
        <begin position="794"/>
        <end position="811"/>
    </location>
</feature>
<feature type="helix" evidence="17">
    <location>
        <begin position="814"/>
        <end position="825"/>
    </location>
</feature>
<feature type="strand" evidence="17">
    <location>
        <begin position="826"/>
        <end position="828"/>
    </location>
</feature>
<feature type="strand" evidence="17">
    <location>
        <begin position="832"/>
        <end position="835"/>
    </location>
</feature>
<feature type="helix" evidence="17">
    <location>
        <begin position="841"/>
        <end position="854"/>
    </location>
</feature>
<feature type="helix" evidence="17">
    <location>
        <begin position="861"/>
        <end position="870"/>
    </location>
</feature>
<accession>P32480</accession>
<accession>D6W2A5</accession>
<dbReference type="EMBL" id="L03839">
    <property type="status" value="NOT_ANNOTATED_CDS"/>
    <property type="molecule type" value="Genomic_DNA"/>
</dbReference>
<dbReference type="EMBL" id="X87331">
    <property type="protein sequence ID" value="CAA60757.1"/>
    <property type="molecule type" value="Genomic_DNA"/>
</dbReference>
<dbReference type="EMBL" id="Z74946">
    <property type="protein sequence ID" value="CAA99228.1"/>
    <property type="molecule type" value="Genomic_DNA"/>
</dbReference>
<dbReference type="EMBL" id="U08849">
    <property type="protein sequence ID" value="AAA21657.1"/>
    <property type="molecule type" value="Genomic_DNA"/>
</dbReference>
<dbReference type="EMBL" id="BK006948">
    <property type="protein sequence ID" value="DAA10821.1"/>
    <property type="molecule type" value="Genomic_DNA"/>
</dbReference>
<dbReference type="PIR" id="S62177">
    <property type="entry name" value="S62177"/>
</dbReference>
<dbReference type="RefSeq" id="NP_014681.1">
    <property type="nucleotide sequence ID" value="NM_001183457.1"/>
</dbReference>
<dbReference type="PDB" id="8GHA">
    <property type="method" value="EM"/>
    <property type="resolution" value="6.80 A"/>
    <property type="chains" value="B=1-875"/>
</dbReference>
<dbReference type="PDB" id="8GHL">
    <property type="method" value="EM"/>
    <property type="resolution" value="2.96 A"/>
    <property type="chains" value="B/C/H/I=1-875"/>
</dbReference>
<dbReference type="PDB" id="8GHN">
    <property type="method" value="EM"/>
    <property type="resolution" value="2.96 A"/>
    <property type="chains" value="B/C/H/I=1-875"/>
</dbReference>
<dbReference type="PDBsum" id="8GHA"/>
<dbReference type="PDBsum" id="8GHL"/>
<dbReference type="PDBsum" id="8GHN"/>
<dbReference type="SMR" id="P32480"/>
<dbReference type="BioGRID" id="34440">
    <property type="interactions" value="459"/>
</dbReference>
<dbReference type="ComplexPortal" id="CPX-124">
    <property type="entry name" value="HIR complex"/>
</dbReference>
<dbReference type="DIP" id="DIP-2366N"/>
<dbReference type="FunCoup" id="P32480">
    <property type="interactions" value="556"/>
</dbReference>
<dbReference type="IntAct" id="P32480">
    <property type="interactions" value="25"/>
</dbReference>
<dbReference type="MINT" id="P32480"/>
<dbReference type="STRING" id="4932.YOR038C"/>
<dbReference type="GlyGen" id="P32480">
    <property type="glycosylation" value="1 site"/>
</dbReference>
<dbReference type="iPTMnet" id="P32480"/>
<dbReference type="PaxDb" id="4932-YOR038C"/>
<dbReference type="PeptideAtlas" id="P32480"/>
<dbReference type="EnsemblFungi" id="YOR038C_mRNA">
    <property type="protein sequence ID" value="YOR038C"/>
    <property type="gene ID" value="YOR038C"/>
</dbReference>
<dbReference type="GeneID" id="854203"/>
<dbReference type="KEGG" id="sce:YOR038C"/>
<dbReference type="AGR" id="SGD:S000005564"/>
<dbReference type="SGD" id="S000005564">
    <property type="gene designation" value="HIR2"/>
</dbReference>
<dbReference type="VEuPathDB" id="FungiDB:YOR038C"/>
<dbReference type="eggNOG" id="KOG0973">
    <property type="taxonomic scope" value="Eukaryota"/>
</dbReference>
<dbReference type="GeneTree" id="ENSGT00550000074919"/>
<dbReference type="HOGENOM" id="CLU_004372_1_0_1"/>
<dbReference type="InParanoid" id="P32480"/>
<dbReference type="OMA" id="GHENCVA"/>
<dbReference type="OrthoDB" id="1741719at2759"/>
<dbReference type="BioCyc" id="YEAST:G3O-33584-MONOMER"/>
<dbReference type="BioGRID-ORCS" id="854203">
    <property type="hits" value="1 hit in 10 CRISPR screens"/>
</dbReference>
<dbReference type="PRO" id="PR:P32480"/>
<dbReference type="Proteomes" id="UP000002311">
    <property type="component" value="Chromosome XV"/>
</dbReference>
<dbReference type="RNAct" id="P32480">
    <property type="molecule type" value="protein"/>
</dbReference>
<dbReference type="GO" id="GO:0000785">
    <property type="term" value="C:chromatin"/>
    <property type="evidence" value="ECO:0000318"/>
    <property type="project" value="GO_Central"/>
</dbReference>
<dbReference type="GO" id="GO:0005829">
    <property type="term" value="C:cytosol"/>
    <property type="evidence" value="ECO:0000314"/>
    <property type="project" value="SGD"/>
</dbReference>
<dbReference type="GO" id="GO:0000417">
    <property type="term" value="C:HIR complex"/>
    <property type="evidence" value="ECO:0000314"/>
    <property type="project" value="SGD"/>
</dbReference>
<dbReference type="GO" id="GO:0005634">
    <property type="term" value="C:nucleus"/>
    <property type="evidence" value="ECO:0000314"/>
    <property type="project" value="SGD"/>
</dbReference>
<dbReference type="GO" id="GO:0003714">
    <property type="term" value="F:transcription corepressor activity"/>
    <property type="evidence" value="ECO:0000314"/>
    <property type="project" value="SGD"/>
</dbReference>
<dbReference type="GO" id="GO:0006325">
    <property type="term" value="P:chromatin organization"/>
    <property type="evidence" value="ECO:0000314"/>
    <property type="project" value="SGD"/>
</dbReference>
<dbReference type="GO" id="GO:0006338">
    <property type="term" value="P:chromatin remodeling"/>
    <property type="evidence" value="ECO:0000318"/>
    <property type="project" value="GO_Central"/>
</dbReference>
<dbReference type="GO" id="GO:1905268">
    <property type="term" value="P:negative regulation of chromatin organization"/>
    <property type="evidence" value="ECO:0000314"/>
    <property type="project" value="ComplexPortal"/>
</dbReference>
<dbReference type="GO" id="GO:0000122">
    <property type="term" value="P:negative regulation of transcription by RNA polymerase II"/>
    <property type="evidence" value="ECO:0000314"/>
    <property type="project" value="SGD"/>
</dbReference>
<dbReference type="GO" id="GO:0016480">
    <property type="term" value="P:negative regulation of transcription by RNA polymerase III"/>
    <property type="evidence" value="ECO:0000315"/>
    <property type="project" value="SGD"/>
</dbReference>
<dbReference type="GO" id="GO:0006334">
    <property type="term" value="P:nucleosome assembly"/>
    <property type="evidence" value="ECO:0000314"/>
    <property type="project" value="ComplexPortal"/>
</dbReference>
<dbReference type="GO" id="GO:0140673">
    <property type="term" value="P:transcription elongation-coupled chromatin remodeling"/>
    <property type="evidence" value="ECO:0000316"/>
    <property type="project" value="SGD"/>
</dbReference>
<dbReference type="FunFam" id="2.130.10.10:FF:001936">
    <property type="entry name" value="Protein HIR2"/>
    <property type="match status" value="1"/>
</dbReference>
<dbReference type="Gene3D" id="2.130.10.10">
    <property type="entry name" value="YVTN repeat-like/Quinoprotein amine dehydrogenase"/>
    <property type="match status" value="1"/>
</dbReference>
<dbReference type="InterPro" id="IPR031120">
    <property type="entry name" value="HIR1-like"/>
</dbReference>
<dbReference type="InterPro" id="IPR011494">
    <property type="entry name" value="HIRA-like_C"/>
</dbReference>
<dbReference type="InterPro" id="IPR015943">
    <property type="entry name" value="WD40/YVTN_repeat-like_dom_sf"/>
</dbReference>
<dbReference type="InterPro" id="IPR036322">
    <property type="entry name" value="WD40_repeat_dom_sf"/>
</dbReference>
<dbReference type="PANTHER" id="PTHR13831">
    <property type="entry name" value="MEMBER OF THE HIR1 FAMILY OF WD-REPEAT PROTEINS"/>
    <property type="match status" value="1"/>
</dbReference>
<dbReference type="PANTHER" id="PTHR13831:SF1">
    <property type="entry name" value="PROTEIN HIR2"/>
    <property type="match status" value="1"/>
</dbReference>
<dbReference type="Pfam" id="PF07569">
    <property type="entry name" value="Hira"/>
    <property type="match status" value="1"/>
</dbReference>
<dbReference type="SUPFAM" id="SSF101908">
    <property type="entry name" value="Putative isomerase YbhE"/>
    <property type="match status" value="1"/>
</dbReference>
<dbReference type="SUPFAM" id="SSF50978">
    <property type="entry name" value="WD40 repeat-like"/>
    <property type="match status" value="1"/>
</dbReference>
<dbReference type="PROSITE" id="PS00678">
    <property type="entry name" value="WD_REPEATS_1"/>
    <property type="match status" value="1"/>
</dbReference>
<dbReference type="PROSITE" id="PS50294">
    <property type="entry name" value="WD_REPEATS_REGION"/>
    <property type="match status" value="1"/>
</dbReference>
<comment type="function">
    <text evidence="2 4 5 7 8 9 11 12 13 14">Component of the HIR complex, which cooperates with ASF1 to promote replication-independent chromatin assembly. The HIR complex is also required for the periodic repression of three of the four histone gene loci during the cell cycle as well as for autogenous regulation of the HTA1-HTB1 locus by H2A and H2B. DNA-binding by the HIR complex may repress transcription by inhibiting nucleosome remodeling by the SWI/SNF complex. The HIR complex may also be required for transcriptional silencing of centromeric, telomeric and mating-type loci in the absence of CAF-1.</text>
</comment>
<comment type="subunit">
    <text evidence="2 3 7 8 10 12">Component of the HIR complex, composed of HIR1, HIR2, HIR3 and HPC2 (PubMed:16264190, PubMed:16303565, PubMed:9001207). This complex may consist of one copy of HIR1 and HIR3 and two copies of HIR2 and HPC2 (PubMed:16264190). The HIR complex interacts with ASF1 (PubMed:11412995, PubMed:16303565). Interacts with SNF2 (PubMed:10445029). Interacts with SNF5 (PubMed:10445029). Interacts with SWI3 (PubMed:10445029). Interacts with RTT106 (PubMed:19683497).</text>
</comment>
<comment type="interaction">
    <interactant intactId="EBI-8323">
        <id>P32480</id>
    </interactant>
    <interactant intactId="EBI-8316">
        <id>P32479</id>
        <label>HIR1</label>
    </interactant>
    <organismsDiffer>false</organismsDiffer>
    <experiments>9</experiments>
</comment>
<comment type="interaction">
    <interactant intactId="EBI-8323">
        <id>P32480</id>
    </interactant>
    <interactant intactId="EBI-25715">
        <id>P47171</id>
        <label>HIR3</label>
    </interactant>
    <organismsDiffer>false</organismsDiffer>
    <experiments>3</experiments>
</comment>
<comment type="subcellular location">
    <subcellularLocation>
        <location evidence="11">Nucleus</location>
    </subcellularLocation>
    <subcellularLocation>
        <location evidence="10">Chromosome</location>
    </subcellularLocation>
    <text evidence="10">Localizes to the promoter region of histones HTA1-HTB1.</text>
</comment>
<comment type="disruption phenotype">
    <text evidence="10">Abolishes localization of RTT106 to the HTA1-HTB1 promoter.</text>
</comment>
<comment type="miscellaneous">
    <text evidence="6">Present with 922 molecules/cell in log phase SD medium.</text>
</comment>
<comment type="similarity">
    <text evidence="15">Belongs to the WD repeat HIR1 family.</text>
</comment>